<protein>
    <recommendedName>
        <fullName evidence="1">ATP synthase subunit beta</fullName>
        <ecNumber evidence="1">7.1.2.2</ecNumber>
    </recommendedName>
    <alternativeName>
        <fullName evidence="1">ATP synthase F1 sector subunit beta</fullName>
    </alternativeName>
    <alternativeName>
        <fullName evidence="1">F-ATPase subunit beta</fullName>
    </alternativeName>
</protein>
<feature type="chain" id="PRO_0000254279" description="ATP synthase subunit beta">
    <location>
        <begin position="1"/>
        <end position="479"/>
    </location>
</feature>
<feature type="binding site" evidence="1">
    <location>
        <begin position="153"/>
        <end position="160"/>
    </location>
    <ligand>
        <name>ATP</name>
        <dbReference type="ChEBI" id="CHEBI:30616"/>
    </ligand>
</feature>
<evidence type="ECO:0000255" key="1">
    <source>
        <dbReference type="HAMAP-Rule" id="MF_01347"/>
    </source>
</evidence>
<reference key="1">
    <citation type="journal article" date="2006" name="Proc. Natl. Acad. Sci. U.S.A.">
        <title>The complete genome sequence of Lactobacillus bulgaricus reveals extensive and ongoing reductive evolution.</title>
        <authorList>
            <person name="van de Guchte M."/>
            <person name="Penaud S."/>
            <person name="Grimaldi C."/>
            <person name="Barbe V."/>
            <person name="Bryson K."/>
            <person name="Nicolas P."/>
            <person name="Robert C."/>
            <person name="Oztas S."/>
            <person name="Mangenot S."/>
            <person name="Couloux A."/>
            <person name="Loux V."/>
            <person name="Dervyn R."/>
            <person name="Bossy R."/>
            <person name="Bolotin A."/>
            <person name="Batto J.-M."/>
            <person name="Walunas T."/>
            <person name="Gibrat J.-F."/>
            <person name="Bessieres P."/>
            <person name="Weissenbach J."/>
            <person name="Ehrlich S.D."/>
            <person name="Maguin E."/>
        </authorList>
    </citation>
    <scope>NUCLEOTIDE SEQUENCE [LARGE SCALE GENOMIC DNA]</scope>
    <source>
        <strain>ATCC 11842 / DSM 20081 / BCRC 10696 / JCM 1002 / NBRC 13953 / NCIMB 11778 / NCTC 12712 / WDCM 00102 / Lb 14</strain>
    </source>
</reference>
<organism>
    <name type="scientific">Lactobacillus delbrueckii subsp. bulgaricus (strain ATCC 11842 / DSM 20081 / BCRC 10696 / JCM 1002 / NBRC 13953 / NCIMB 11778 / NCTC 12712 / WDCM 00102 / Lb 14)</name>
    <dbReference type="NCBI Taxonomy" id="390333"/>
    <lineage>
        <taxon>Bacteria</taxon>
        <taxon>Bacillati</taxon>
        <taxon>Bacillota</taxon>
        <taxon>Bacilli</taxon>
        <taxon>Lactobacillales</taxon>
        <taxon>Lactobacillaceae</taxon>
        <taxon>Lactobacillus</taxon>
    </lineage>
</organism>
<comment type="function">
    <text evidence="1">Produces ATP from ADP in the presence of a proton gradient across the membrane. The catalytic sites are hosted primarily by the beta subunits.</text>
</comment>
<comment type="catalytic activity">
    <reaction evidence="1">
        <text>ATP + H2O + 4 H(+)(in) = ADP + phosphate + 5 H(+)(out)</text>
        <dbReference type="Rhea" id="RHEA:57720"/>
        <dbReference type="ChEBI" id="CHEBI:15377"/>
        <dbReference type="ChEBI" id="CHEBI:15378"/>
        <dbReference type="ChEBI" id="CHEBI:30616"/>
        <dbReference type="ChEBI" id="CHEBI:43474"/>
        <dbReference type="ChEBI" id="CHEBI:456216"/>
        <dbReference type="EC" id="7.1.2.2"/>
    </reaction>
</comment>
<comment type="subunit">
    <text evidence="1">F-type ATPases have 2 components, CF(1) - the catalytic core - and CF(0) - the membrane proton channel. CF(1) has five subunits: alpha(3), beta(3), gamma(1), delta(1), epsilon(1). CF(0) has three main subunits: a(1), b(2) and c(9-12). The alpha and beta chains form an alternating ring which encloses part of the gamma chain. CF(1) is attached to CF(0) by a central stalk formed by the gamma and epsilon chains, while a peripheral stalk is formed by the delta and b chains.</text>
</comment>
<comment type="subcellular location">
    <subcellularLocation>
        <location evidence="1">Cell membrane</location>
        <topology evidence="1">Peripheral membrane protein</topology>
    </subcellularLocation>
</comment>
<comment type="similarity">
    <text evidence="1">Belongs to the ATPase alpha/beta chains family.</text>
</comment>
<accession>Q1GAW5</accession>
<sequence length="479" mass="52240">MSQGEIVQVIGLVVDVKFSIGKDLPDINNALKVIKSDDDSIILEVILEQGDGVLRCIAMESTDGLRRGMKVEDTGSSISVPVGPDTLGRVFNVLGQPIDGGPEFPADHPRSGIHKEAPKYDELTTSREILETGIKVIDLLEPYLRGGKVGLFGGAGVGKTTIIQELIHNIAQEHNGISVFTGVGERTREGNDLYFEMKASGVLDKTAMVFGQMNEPPGARMRVALTGLTIAEYFRDVEGQDVLLFIDNIFRFTQAGSEVSALLGRIPSAVGYQPTLATEMGQLQERITSTKKGSITSIQAVYVPADDYTDPAPATTFAYLDATTNLERSLVEQGIYPAVDPLESTSSALDPEIVGQEHYDVATRVQHILQRYRELQNIISVLGMDELSDEEKLIVARARRIQFFLSQNFFVAEVFTSVPGSYVPIKETIKGFKMILDGHLDDLPEDAFRGVGPIEDVLKKALKMGVTPSDPEAKALLEK</sequence>
<gene>
    <name evidence="1" type="primary">atpD</name>
    <name type="ordered locus">Ldb0711</name>
</gene>
<keyword id="KW-0066">ATP synthesis</keyword>
<keyword id="KW-0067">ATP-binding</keyword>
<keyword id="KW-1003">Cell membrane</keyword>
<keyword id="KW-0139">CF(1)</keyword>
<keyword id="KW-0375">Hydrogen ion transport</keyword>
<keyword id="KW-0406">Ion transport</keyword>
<keyword id="KW-0472">Membrane</keyword>
<keyword id="KW-0547">Nucleotide-binding</keyword>
<keyword id="KW-1185">Reference proteome</keyword>
<keyword id="KW-1278">Translocase</keyword>
<keyword id="KW-0813">Transport</keyword>
<name>ATPB_LACDA</name>
<proteinExistence type="inferred from homology"/>
<dbReference type="EC" id="7.1.2.2" evidence="1"/>
<dbReference type="EMBL" id="CR954253">
    <property type="protein sequence ID" value="CAI97538.1"/>
    <property type="molecule type" value="Genomic_DNA"/>
</dbReference>
<dbReference type="RefSeq" id="WP_011543762.1">
    <property type="nucleotide sequence ID" value="NC_008054.1"/>
</dbReference>
<dbReference type="SMR" id="Q1GAW5"/>
<dbReference type="STRING" id="390333.Ldb0711"/>
<dbReference type="KEGG" id="ldb:Ldb0711"/>
<dbReference type="PATRIC" id="fig|390333.7.peg.656"/>
<dbReference type="eggNOG" id="COG0055">
    <property type="taxonomic scope" value="Bacteria"/>
</dbReference>
<dbReference type="HOGENOM" id="CLU_022398_0_2_9"/>
<dbReference type="BioCyc" id="LDEL390333:LDB_RS03095-MONOMER"/>
<dbReference type="Proteomes" id="UP000001259">
    <property type="component" value="Chromosome"/>
</dbReference>
<dbReference type="GO" id="GO:0005886">
    <property type="term" value="C:plasma membrane"/>
    <property type="evidence" value="ECO:0007669"/>
    <property type="project" value="UniProtKB-SubCell"/>
</dbReference>
<dbReference type="GO" id="GO:0045259">
    <property type="term" value="C:proton-transporting ATP synthase complex"/>
    <property type="evidence" value="ECO:0007669"/>
    <property type="project" value="UniProtKB-KW"/>
</dbReference>
<dbReference type="GO" id="GO:0005524">
    <property type="term" value="F:ATP binding"/>
    <property type="evidence" value="ECO:0007669"/>
    <property type="project" value="UniProtKB-UniRule"/>
</dbReference>
<dbReference type="GO" id="GO:0016887">
    <property type="term" value="F:ATP hydrolysis activity"/>
    <property type="evidence" value="ECO:0007669"/>
    <property type="project" value="InterPro"/>
</dbReference>
<dbReference type="GO" id="GO:0046933">
    <property type="term" value="F:proton-transporting ATP synthase activity, rotational mechanism"/>
    <property type="evidence" value="ECO:0007669"/>
    <property type="project" value="UniProtKB-UniRule"/>
</dbReference>
<dbReference type="CDD" id="cd18110">
    <property type="entry name" value="ATP-synt_F1_beta_C"/>
    <property type="match status" value="1"/>
</dbReference>
<dbReference type="CDD" id="cd18115">
    <property type="entry name" value="ATP-synt_F1_beta_N"/>
    <property type="match status" value="1"/>
</dbReference>
<dbReference type="CDD" id="cd01133">
    <property type="entry name" value="F1-ATPase_beta_CD"/>
    <property type="match status" value="1"/>
</dbReference>
<dbReference type="FunFam" id="1.10.1140.10:FF:000001">
    <property type="entry name" value="ATP synthase subunit beta"/>
    <property type="match status" value="1"/>
</dbReference>
<dbReference type="FunFam" id="3.40.50.300:FF:000004">
    <property type="entry name" value="ATP synthase subunit beta"/>
    <property type="match status" value="1"/>
</dbReference>
<dbReference type="Gene3D" id="2.40.10.170">
    <property type="match status" value="1"/>
</dbReference>
<dbReference type="Gene3D" id="1.10.1140.10">
    <property type="entry name" value="Bovine Mitochondrial F1-atpase, Atp Synthase Beta Chain, Chain D, domain 3"/>
    <property type="match status" value="1"/>
</dbReference>
<dbReference type="Gene3D" id="3.40.50.300">
    <property type="entry name" value="P-loop containing nucleotide triphosphate hydrolases"/>
    <property type="match status" value="1"/>
</dbReference>
<dbReference type="HAMAP" id="MF_01347">
    <property type="entry name" value="ATP_synth_beta_bact"/>
    <property type="match status" value="1"/>
</dbReference>
<dbReference type="InterPro" id="IPR003593">
    <property type="entry name" value="AAA+_ATPase"/>
</dbReference>
<dbReference type="InterPro" id="IPR055190">
    <property type="entry name" value="ATP-synt_VA_C"/>
</dbReference>
<dbReference type="InterPro" id="IPR005722">
    <property type="entry name" value="ATP_synth_F1_bsu"/>
</dbReference>
<dbReference type="InterPro" id="IPR020003">
    <property type="entry name" value="ATPase_a/bsu_AS"/>
</dbReference>
<dbReference type="InterPro" id="IPR050053">
    <property type="entry name" value="ATPase_alpha/beta_chains"/>
</dbReference>
<dbReference type="InterPro" id="IPR004100">
    <property type="entry name" value="ATPase_F1/V1/A1_a/bsu_N"/>
</dbReference>
<dbReference type="InterPro" id="IPR036121">
    <property type="entry name" value="ATPase_F1/V1/A1_a/bsu_N_sf"/>
</dbReference>
<dbReference type="InterPro" id="IPR000194">
    <property type="entry name" value="ATPase_F1/V1/A1_a/bsu_nucl-bd"/>
</dbReference>
<dbReference type="InterPro" id="IPR024034">
    <property type="entry name" value="ATPase_F1/V1_b/a_C"/>
</dbReference>
<dbReference type="InterPro" id="IPR027417">
    <property type="entry name" value="P-loop_NTPase"/>
</dbReference>
<dbReference type="NCBIfam" id="TIGR01039">
    <property type="entry name" value="atpD"/>
    <property type="match status" value="1"/>
</dbReference>
<dbReference type="PANTHER" id="PTHR15184">
    <property type="entry name" value="ATP SYNTHASE"/>
    <property type="match status" value="1"/>
</dbReference>
<dbReference type="PANTHER" id="PTHR15184:SF71">
    <property type="entry name" value="ATP SYNTHASE SUBUNIT BETA, MITOCHONDRIAL"/>
    <property type="match status" value="1"/>
</dbReference>
<dbReference type="Pfam" id="PF00006">
    <property type="entry name" value="ATP-synt_ab"/>
    <property type="match status" value="1"/>
</dbReference>
<dbReference type="Pfam" id="PF02874">
    <property type="entry name" value="ATP-synt_ab_N"/>
    <property type="match status" value="1"/>
</dbReference>
<dbReference type="Pfam" id="PF22919">
    <property type="entry name" value="ATP-synt_VA_C"/>
    <property type="match status" value="1"/>
</dbReference>
<dbReference type="SMART" id="SM00382">
    <property type="entry name" value="AAA"/>
    <property type="match status" value="1"/>
</dbReference>
<dbReference type="SUPFAM" id="SSF47917">
    <property type="entry name" value="C-terminal domain of alpha and beta subunits of F1 ATP synthase"/>
    <property type="match status" value="1"/>
</dbReference>
<dbReference type="SUPFAM" id="SSF50615">
    <property type="entry name" value="N-terminal domain of alpha and beta subunits of F1 ATP synthase"/>
    <property type="match status" value="1"/>
</dbReference>
<dbReference type="SUPFAM" id="SSF52540">
    <property type="entry name" value="P-loop containing nucleoside triphosphate hydrolases"/>
    <property type="match status" value="1"/>
</dbReference>
<dbReference type="PROSITE" id="PS00152">
    <property type="entry name" value="ATPASE_ALPHA_BETA"/>
    <property type="match status" value="1"/>
</dbReference>